<reference key="1">
    <citation type="submission" date="2006-08" db="EMBL/GenBank/DDBJ databases">
        <authorList>
            <consortium name="NIH - Mammalian Gene Collection (MGC) project"/>
        </authorList>
    </citation>
    <scope>NUCLEOTIDE SEQUENCE [LARGE SCALE MRNA]</scope>
    <source>
        <strain>Hereford</strain>
        <tissue>Thalamus</tissue>
    </source>
</reference>
<proteinExistence type="evidence at transcript level"/>
<sequence>MEFVMKQALGGATKDMGKMLGGDEEKDPDAAKKEEERQEALRQEEEERKAKYAKMEAEREAVRQGIRDKYGIKKKEEREAEAQAALEANSEGSLTRPKKAIPPGCGDAAEEEDESILDTVIKYLPGPLQDIFKK</sequence>
<keyword id="KW-0966">Cell projection</keyword>
<keyword id="KW-0175">Coiled coil</keyword>
<keyword id="KW-0963">Cytoplasm</keyword>
<keyword id="KW-0268">Exocytosis</keyword>
<keyword id="KW-0532">Neurotransmitter transport</keyword>
<keyword id="KW-1185">Reference proteome</keyword>
<keyword id="KW-0770">Synapse</keyword>
<keyword id="KW-0813">Transport</keyword>
<organism>
    <name type="scientific">Bos taurus</name>
    <name type="common">Bovine</name>
    <dbReference type="NCBI Taxonomy" id="9913"/>
    <lineage>
        <taxon>Eukaryota</taxon>
        <taxon>Metazoa</taxon>
        <taxon>Chordata</taxon>
        <taxon>Craniata</taxon>
        <taxon>Vertebrata</taxon>
        <taxon>Euteleostomi</taxon>
        <taxon>Mammalia</taxon>
        <taxon>Eutheria</taxon>
        <taxon>Laurasiatheria</taxon>
        <taxon>Artiodactyla</taxon>
        <taxon>Ruminantia</taxon>
        <taxon>Pecora</taxon>
        <taxon>Bovidae</taxon>
        <taxon>Bovinae</taxon>
        <taxon>Bos</taxon>
    </lineage>
</organism>
<gene>
    <name type="primary">CPLX1</name>
</gene>
<comment type="function">
    <text evidence="1">Positively regulates a late step in synaptic vesicle exocytosis. Organizes the SNAREs into a cross-linked zigzag topology that, when interposed between the vesicle and plasma membranes, is incompatible with fusion, thereby preventing SNAREs from releasing neurotransmitters until an action potential arrives at the synapse. Also involved in glucose-induced secretion of insulin by pancreatic beta-cells (By similarity).</text>
</comment>
<comment type="subunit">
    <text evidence="1">Binds to the SNARE core complex containing SNAP25, VAMP2 and STX1A.</text>
</comment>
<comment type="subcellular location">
    <subcellularLocation>
        <location evidence="2">Cytoplasm</location>
        <location evidence="2">Cytosol</location>
    </subcellularLocation>
    <subcellularLocation>
        <location evidence="2">Perikaryon</location>
    </subcellularLocation>
    <subcellularLocation>
        <location evidence="2">Presynapse</location>
    </subcellularLocation>
    <text evidence="2">Enriched at synaptic-releasing sites in mature neurons.</text>
</comment>
<comment type="similarity">
    <text evidence="5">Belongs to the complexin/synaphin family.</text>
</comment>
<feature type="chain" id="PRO_0000290028" description="Complexin-1">
    <location>
        <begin position="1"/>
        <end position="134"/>
    </location>
</feature>
<feature type="region of interest" description="Disordered" evidence="4">
    <location>
        <begin position="1"/>
        <end position="112"/>
    </location>
</feature>
<feature type="region of interest" description="Interaction with the SNARE complex" evidence="1">
    <location>
        <begin position="48"/>
        <end position="70"/>
    </location>
</feature>
<feature type="coiled-coil region" evidence="3">
    <location>
        <begin position="29"/>
        <end position="69"/>
    </location>
</feature>
<feature type="compositionally biased region" description="Basic and acidic residues" evidence="4">
    <location>
        <begin position="15"/>
        <end position="81"/>
    </location>
</feature>
<protein>
    <recommendedName>
        <fullName>Complexin-1</fullName>
    </recommendedName>
</protein>
<evidence type="ECO:0000250" key="1"/>
<evidence type="ECO:0000250" key="2">
    <source>
        <dbReference type="UniProtKB" id="P63040"/>
    </source>
</evidence>
<evidence type="ECO:0000255" key="3"/>
<evidence type="ECO:0000256" key="4">
    <source>
        <dbReference type="SAM" id="MobiDB-lite"/>
    </source>
</evidence>
<evidence type="ECO:0000305" key="5"/>
<name>CPLX1_BOVIN</name>
<dbReference type="EMBL" id="BC122583">
    <property type="protein sequence ID" value="AAI22584.1"/>
    <property type="molecule type" value="mRNA"/>
</dbReference>
<dbReference type="RefSeq" id="NP_001071571.1">
    <property type="nucleotide sequence ID" value="NM_001078103.1"/>
</dbReference>
<dbReference type="FunCoup" id="Q0IIL7">
    <property type="interactions" value="665"/>
</dbReference>
<dbReference type="STRING" id="9913.ENSBTAP00000069020"/>
<dbReference type="iPTMnet" id="Q0IIL7"/>
<dbReference type="GeneID" id="768228"/>
<dbReference type="KEGG" id="bta:768228"/>
<dbReference type="CTD" id="10815"/>
<dbReference type="VEuPathDB" id="HostDB:ENSBTAG00000050808"/>
<dbReference type="InParanoid" id="Q0IIL7"/>
<dbReference type="OMA" id="MGATKDM"/>
<dbReference type="OrthoDB" id="5972090at2759"/>
<dbReference type="Reactome" id="R-BTA-181429">
    <property type="pathway name" value="Serotonin Neurotransmitter Release Cycle"/>
</dbReference>
<dbReference type="Reactome" id="R-BTA-181430">
    <property type="pathway name" value="Norepinephrine Neurotransmitter Release Cycle"/>
</dbReference>
<dbReference type="Reactome" id="R-BTA-210500">
    <property type="pathway name" value="Glutamate Neurotransmitter Release Cycle"/>
</dbReference>
<dbReference type="Reactome" id="R-BTA-212676">
    <property type="pathway name" value="Dopamine Neurotransmitter Release Cycle"/>
</dbReference>
<dbReference type="Reactome" id="R-BTA-264642">
    <property type="pathway name" value="Acetylcholine Neurotransmitter Release Cycle"/>
</dbReference>
<dbReference type="Reactome" id="R-BTA-888590">
    <property type="pathway name" value="GABA synthesis, release, reuptake and degradation"/>
</dbReference>
<dbReference type="Proteomes" id="UP000009136">
    <property type="component" value="Chromosome 6"/>
</dbReference>
<dbReference type="Bgee" id="ENSBTAG00000050808">
    <property type="expression patterns" value="Expressed in retina and 49 other cell types or tissues"/>
</dbReference>
<dbReference type="GO" id="GO:0005829">
    <property type="term" value="C:cytosol"/>
    <property type="evidence" value="ECO:0007669"/>
    <property type="project" value="UniProtKB-SubCell"/>
</dbReference>
<dbReference type="GO" id="GO:0043204">
    <property type="term" value="C:perikaryon"/>
    <property type="evidence" value="ECO:0007669"/>
    <property type="project" value="UniProtKB-SubCell"/>
</dbReference>
<dbReference type="GO" id="GO:0031201">
    <property type="term" value="C:SNARE complex"/>
    <property type="evidence" value="ECO:0000318"/>
    <property type="project" value="GO_Central"/>
</dbReference>
<dbReference type="GO" id="GO:0043195">
    <property type="term" value="C:terminal bouton"/>
    <property type="evidence" value="ECO:0000318"/>
    <property type="project" value="GO_Central"/>
</dbReference>
<dbReference type="GO" id="GO:0000149">
    <property type="term" value="F:SNARE binding"/>
    <property type="evidence" value="ECO:0000318"/>
    <property type="project" value="GO_Central"/>
</dbReference>
<dbReference type="GO" id="GO:0019905">
    <property type="term" value="F:syntaxin binding"/>
    <property type="evidence" value="ECO:0007669"/>
    <property type="project" value="InterPro"/>
</dbReference>
<dbReference type="GO" id="GO:0050804">
    <property type="term" value="P:modulation of chemical synaptic transmission"/>
    <property type="evidence" value="ECO:0000318"/>
    <property type="project" value="GO_Central"/>
</dbReference>
<dbReference type="GO" id="GO:0031630">
    <property type="term" value="P:regulation of synaptic vesicle fusion to presynaptic active zone membrane"/>
    <property type="evidence" value="ECO:0000318"/>
    <property type="project" value="GO_Central"/>
</dbReference>
<dbReference type="GO" id="GO:0016079">
    <property type="term" value="P:synaptic vesicle exocytosis"/>
    <property type="evidence" value="ECO:0000318"/>
    <property type="project" value="GO_Central"/>
</dbReference>
<dbReference type="CDD" id="cd22740">
    <property type="entry name" value="Complexin_NTD"/>
    <property type="match status" value="1"/>
</dbReference>
<dbReference type="FunFam" id="1.20.5.580:FF:000001">
    <property type="entry name" value="Complexin 2"/>
    <property type="match status" value="1"/>
</dbReference>
<dbReference type="Gene3D" id="1.20.5.580">
    <property type="entry name" value="Single Helix bin"/>
    <property type="match status" value="1"/>
</dbReference>
<dbReference type="InterPro" id="IPR008849">
    <property type="entry name" value="Synaphin"/>
</dbReference>
<dbReference type="PANTHER" id="PTHR16705">
    <property type="entry name" value="COMPLEXIN"/>
    <property type="match status" value="1"/>
</dbReference>
<dbReference type="PANTHER" id="PTHR16705:SF6">
    <property type="entry name" value="COMPLEXIN-1"/>
    <property type="match status" value="1"/>
</dbReference>
<dbReference type="Pfam" id="PF05835">
    <property type="entry name" value="Synaphin"/>
    <property type="match status" value="1"/>
</dbReference>
<dbReference type="SUPFAM" id="SSF58038">
    <property type="entry name" value="SNARE fusion complex"/>
    <property type="match status" value="1"/>
</dbReference>
<accession>Q0IIL7</accession>